<feature type="chain" id="PRO_0000213208" description="N-acylneuraminate cytidylyltransferase">
    <location>
        <begin position="1"/>
        <end position="413"/>
    </location>
</feature>
<feature type="sequence conflict" description="In Ref. 1 and 2." evidence="3" ref="1 2">
    <original>TQEANDLLQSQYQLFVDEVKTL</original>
    <variation>DSRG</variation>
    <location>
        <begin position="392"/>
        <end position="413"/>
    </location>
</feature>
<sequence length="413" mass="47670">MKPICIIPARSGSKGLPDKNMLFLAGKPMIFHTIDAAIESGMFDKKDIFVSTDSELYREICLERGISVVMRKPELSTDQATSYDMLKDFLSDYEDNQEFVLLQVTSPLRKSWHIKEAMEYYSSHDVDNVVSFSEVEKHPGLFTTLSDKGYAIDMVGADKGYRRQDLQPLYYPNGAIFISNKETYLREKSFFTSRTYAYQMAKEFSLDVDTRDDFIHVIGHLFFDYAIREKENKVFYKEGYSRLFNREASKIILGDSKTISISLENYHNYSQGGVTLATMLENLPNFLTANVTEAFVSIGVNDLITGYSVEEIFSNFQKLYSLLAENKIKMRFTTIAYTLFRETVNNADIEKINQWLTEFCYQNQIPLLDINRFLSKDGNLNYHLTSDGLHFTQEANDLLQSQYQLFVDEVKTL</sequence>
<evidence type="ECO:0000250" key="1"/>
<evidence type="ECO:0000269" key="2">
    <source>
    </source>
</evidence>
<evidence type="ECO:0000305" key="3"/>
<evidence type="ECO:0000305" key="4">
    <source>
    </source>
</evidence>
<name>NEUA_STRA3</name>
<dbReference type="EC" id="2.7.7.43"/>
<dbReference type="EMBL" id="U19899">
    <property type="protein sequence ID" value="AAB50271.1"/>
    <property type="molecule type" value="Genomic_DNA"/>
</dbReference>
<dbReference type="EMBL" id="AF163833">
    <property type="protein sequence ID" value="AAD53077.1"/>
    <property type="molecule type" value="Genomic_DNA"/>
</dbReference>
<dbReference type="EMBL" id="AL766849">
    <property type="protein sequence ID" value="CAD46892.1"/>
    <property type="molecule type" value="Genomic_DNA"/>
</dbReference>
<dbReference type="RefSeq" id="WP_000802346.1">
    <property type="nucleotide sequence ID" value="NC_004368.1"/>
</dbReference>
<dbReference type="SMR" id="P0A4V0"/>
<dbReference type="KEGG" id="san:neuA"/>
<dbReference type="eggNOG" id="COG1083">
    <property type="taxonomic scope" value="Bacteria"/>
</dbReference>
<dbReference type="eggNOG" id="COG2755">
    <property type="taxonomic scope" value="Bacteria"/>
</dbReference>
<dbReference type="HOGENOM" id="CLU_660110_0_0_9"/>
<dbReference type="Proteomes" id="UP000000823">
    <property type="component" value="Chromosome"/>
</dbReference>
<dbReference type="GO" id="GO:0005737">
    <property type="term" value="C:cytoplasm"/>
    <property type="evidence" value="ECO:0007669"/>
    <property type="project" value="UniProtKB-SubCell"/>
</dbReference>
<dbReference type="GO" id="GO:0008781">
    <property type="term" value="F:N-acylneuraminate cytidylyltransferase activity"/>
    <property type="evidence" value="ECO:0007669"/>
    <property type="project" value="UniProtKB-EC"/>
</dbReference>
<dbReference type="GO" id="GO:0000271">
    <property type="term" value="P:polysaccharide biosynthetic process"/>
    <property type="evidence" value="ECO:0007669"/>
    <property type="project" value="UniProtKB-KW"/>
</dbReference>
<dbReference type="CDD" id="cd02513">
    <property type="entry name" value="CMP-NeuAc_Synthase"/>
    <property type="match status" value="1"/>
</dbReference>
<dbReference type="Gene3D" id="3.40.50.1110">
    <property type="entry name" value="SGNH hydrolase"/>
    <property type="match status" value="1"/>
</dbReference>
<dbReference type="Gene3D" id="3.90.550.10">
    <property type="entry name" value="Spore Coat Polysaccharide Biosynthesis Protein SpsA, Chain A"/>
    <property type="match status" value="1"/>
</dbReference>
<dbReference type="InterPro" id="IPR050793">
    <property type="entry name" value="CMP-NeuNAc_synthase"/>
</dbReference>
<dbReference type="InterPro" id="IPR003329">
    <property type="entry name" value="Cytidylyl_trans"/>
</dbReference>
<dbReference type="InterPro" id="IPR029044">
    <property type="entry name" value="Nucleotide-diphossugar_trans"/>
</dbReference>
<dbReference type="InterPro" id="IPR013830">
    <property type="entry name" value="SGNH_hydro"/>
</dbReference>
<dbReference type="InterPro" id="IPR036514">
    <property type="entry name" value="SGNH_hydro_sf"/>
</dbReference>
<dbReference type="PANTHER" id="PTHR21485">
    <property type="entry name" value="HAD SUPERFAMILY MEMBERS CMAS AND KDSC"/>
    <property type="match status" value="1"/>
</dbReference>
<dbReference type="PANTHER" id="PTHR21485:SF6">
    <property type="entry name" value="N-ACYLNEURAMINATE CYTIDYLYLTRANSFERASE-RELATED"/>
    <property type="match status" value="1"/>
</dbReference>
<dbReference type="Pfam" id="PF02348">
    <property type="entry name" value="CTP_transf_3"/>
    <property type="match status" value="1"/>
</dbReference>
<dbReference type="Pfam" id="PF13472">
    <property type="entry name" value="Lipase_GDSL_2"/>
    <property type="match status" value="1"/>
</dbReference>
<dbReference type="SUPFAM" id="SSF53448">
    <property type="entry name" value="Nucleotide-diphospho-sugar transferases"/>
    <property type="match status" value="1"/>
</dbReference>
<dbReference type="SUPFAM" id="SSF52266">
    <property type="entry name" value="SGNH hydrolase"/>
    <property type="match status" value="1"/>
</dbReference>
<gene>
    <name type="primary">neuA</name>
    <name type="ordered locus">gbs1233</name>
</gene>
<organism>
    <name type="scientific">Streptococcus agalactiae serotype III (strain NEM316)</name>
    <dbReference type="NCBI Taxonomy" id="211110"/>
    <lineage>
        <taxon>Bacteria</taxon>
        <taxon>Bacillati</taxon>
        <taxon>Bacillota</taxon>
        <taxon>Bacilli</taxon>
        <taxon>Lactobacillales</taxon>
        <taxon>Streptococcaceae</taxon>
        <taxon>Streptococcus</taxon>
    </lineage>
</organism>
<proteinExistence type="evidence at protein level"/>
<keyword id="KW-0972">Capsule biogenesis/degradation</keyword>
<keyword id="KW-0963">Cytoplasm</keyword>
<keyword id="KW-0270">Exopolysaccharide synthesis</keyword>
<keyword id="KW-0460">Magnesium</keyword>
<keyword id="KW-0464">Manganese</keyword>
<keyword id="KW-0548">Nucleotidyltransferase</keyword>
<keyword id="KW-0808">Transferase</keyword>
<protein>
    <recommendedName>
        <fullName>N-acylneuraminate cytidylyltransferase</fullName>
        <ecNumber>2.7.7.43</ecNumber>
    </recommendedName>
    <alternativeName>
        <fullName>CMP-N-acetylneuraminic acid synthase</fullName>
        <shortName>CMP-NeuNAc synthase</shortName>
    </alternativeName>
    <alternativeName>
        <fullName>CMP-sialic acid synthase</fullName>
    </alternativeName>
</protein>
<reference key="1">
    <citation type="journal article" date="1996" name="Mol. Microbiol.">
        <title>Characterization of cpsF and its product CMP-N-acetylneuraminic acid synthetase, a group B streptococcal enzyme that can function in K1 capsular polysaccharide biosynthesis in Escherichia coli.</title>
        <authorList>
            <person name="Haft R.F."/>
            <person name="Wessels M.R."/>
            <person name="Mebane M.F."/>
            <person name="Conaty N."/>
            <person name="Rubens C.E."/>
        </authorList>
    </citation>
    <scope>NUCLEOTIDE SEQUENCE [GENOMIC DNA]</scope>
    <scope>FUNCTION</scope>
    <scope>CATALYTIC ACTIVITY</scope>
    <source>
        <strain>COH31 / Serotype III</strain>
    </source>
</reference>
<reference key="2">
    <citation type="journal article" date="2000" name="J. Bacteriol.">
        <title>The serotype of type Ia and III group B streptococci is determined by the polymerase gene within the polycistronic capsule operon.</title>
        <authorList>
            <person name="Chaffin D.O."/>
            <person name="Beres S.B."/>
            <person name="Yim H.H."/>
            <person name="Rubens C.E."/>
        </authorList>
    </citation>
    <scope>NUCLEOTIDE SEQUENCE [GENOMIC DNA]</scope>
    <source>
        <strain>COH1 / Serotype III</strain>
    </source>
</reference>
<reference key="3">
    <citation type="journal article" date="2002" name="Mol. Microbiol.">
        <title>Genome sequence of Streptococcus agalactiae, a pathogen causing invasive neonatal disease.</title>
        <authorList>
            <person name="Glaser P."/>
            <person name="Rusniok C."/>
            <person name="Buchrieser C."/>
            <person name="Chevalier F."/>
            <person name="Frangeul L."/>
            <person name="Msadek T."/>
            <person name="Zouine M."/>
            <person name="Couve E."/>
            <person name="Lalioui L."/>
            <person name="Poyart C."/>
            <person name="Trieu-Cuot P."/>
            <person name="Kunst F."/>
        </authorList>
    </citation>
    <scope>NUCLEOTIDE SEQUENCE [LARGE SCALE GENOMIC DNA]</scope>
    <source>
        <strain>NEM316</strain>
    </source>
</reference>
<accession>P0A4V0</accession>
<accession>Q53598</accession>
<accession>Q9S0S5</accession>
<comment type="function">
    <text evidence="2">Catalyzes the formation of CMP-N-acetylneuraminic acid (CMP-NeuNAc), which is essential for the formation of the capsule.</text>
</comment>
<comment type="catalytic activity">
    <reaction evidence="2">
        <text>an N-acylneuraminate + CTP = a CMP-N-acyl-beta-neuraminate + diphosphate</text>
        <dbReference type="Rhea" id="RHEA:11344"/>
        <dbReference type="ChEBI" id="CHEBI:33019"/>
        <dbReference type="ChEBI" id="CHEBI:37563"/>
        <dbReference type="ChEBI" id="CHEBI:60073"/>
        <dbReference type="ChEBI" id="CHEBI:68671"/>
        <dbReference type="EC" id="2.7.7.43"/>
    </reaction>
</comment>
<comment type="cofactor">
    <cofactor evidence="1">
        <name>Mg(2+)</name>
        <dbReference type="ChEBI" id="CHEBI:18420"/>
    </cofactor>
    <cofactor evidence="1">
        <name>Mn(2+)</name>
        <dbReference type="ChEBI" id="CHEBI:29035"/>
    </cofactor>
</comment>
<comment type="subcellular location">
    <subcellularLocation>
        <location evidence="1">Cytoplasm</location>
    </subcellularLocation>
</comment>
<comment type="similarity">
    <text evidence="3">Belongs to the CMP-NeuNAc synthase family.</text>
</comment>
<comment type="caution">
    <text evidence="4">Was originally called CpsF.</text>
</comment>